<gene>
    <name type="ORF">SPAC186.06</name>
</gene>
<protein>
    <recommendedName>
        <fullName>Uncharacterized isomerase C186.06</fullName>
        <ecNumber>5.1.-.-</ecNumber>
    </recommendedName>
</protein>
<proteinExistence type="inferred from homology"/>
<organism>
    <name type="scientific">Schizosaccharomyces pombe (strain 972 / ATCC 24843)</name>
    <name type="common">Fission yeast</name>
    <dbReference type="NCBI Taxonomy" id="284812"/>
    <lineage>
        <taxon>Eukaryota</taxon>
        <taxon>Fungi</taxon>
        <taxon>Dikarya</taxon>
        <taxon>Ascomycota</taxon>
        <taxon>Taphrinomycotina</taxon>
        <taxon>Schizosaccharomycetes</taxon>
        <taxon>Schizosaccharomycetales</taxon>
        <taxon>Schizosaccharomycetaceae</taxon>
        <taxon>Schizosaccharomyces</taxon>
    </lineage>
</organism>
<keyword id="KW-0963">Cytoplasm</keyword>
<keyword id="KW-0413">Isomerase</keyword>
<keyword id="KW-0539">Nucleus</keyword>
<keyword id="KW-1185">Reference proteome</keyword>
<evidence type="ECO:0000269" key="1">
    <source>
    </source>
</evidence>
<evidence type="ECO:0000305" key="2"/>
<accession>Q9P7P9</accession>
<reference key="1">
    <citation type="journal article" date="2002" name="Nature">
        <title>The genome sequence of Schizosaccharomyces pombe.</title>
        <authorList>
            <person name="Wood V."/>
            <person name="Gwilliam R."/>
            <person name="Rajandream M.A."/>
            <person name="Lyne M.H."/>
            <person name="Lyne R."/>
            <person name="Stewart A."/>
            <person name="Sgouros J.G."/>
            <person name="Peat N."/>
            <person name="Hayles J."/>
            <person name="Baker S.G."/>
            <person name="Basham D."/>
            <person name="Bowman S."/>
            <person name="Brooks K."/>
            <person name="Brown D."/>
            <person name="Brown S."/>
            <person name="Chillingworth T."/>
            <person name="Churcher C.M."/>
            <person name="Collins M."/>
            <person name="Connor R."/>
            <person name="Cronin A."/>
            <person name="Davis P."/>
            <person name="Feltwell T."/>
            <person name="Fraser A."/>
            <person name="Gentles S."/>
            <person name="Goble A."/>
            <person name="Hamlin N."/>
            <person name="Harris D.E."/>
            <person name="Hidalgo J."/>
            <person name="Hodgson G."/>
            <person name="Holroyd S."/>
            <person name="Hornsby T."/>
            <person name="Howarth S."/>
            <person name="Huckle E.J."/>
            <person name="Hunt S."/>
            <person name="Jagels K."/>
            <person name="James K.D."/>
            <person name="Jones L."/>
            <person name="Jones M."/>
            <person name="Leather S."/>
            <person name="McDonald S."/>
            <person name="McLean J."/>
            <person name="Mooney P."/>
            <person name="Moule S."/>
            <person name="Mungall K.L."/>
            <person name="Murphy L.D."/>
            <person name="Niblett D."/>
            <person name="Odell C."/>
            <person name="Oliver K."/>
            <person name="O'Neil S."/>
            <person name="Pearson D."/>
            <person name="Quail M.A."/>
            <person name="Rabbinowitsch E."/>
            <person name="Rutherford K.M."/>
            <person name="Rutter S."/>
            <person name="Saunders D."/>
            <person name="Seeger K."/>
            <person name="Sharp S."/>
            <person name="Skelton J."/>
            <person name="Simmonds M.N."/>
            <person name="Squares R."/>
            <person name="Squares S."/>
            <person name="Stevens K."/>
            <person name="Taylor K."/>
            <person name="Taylor R.G."/>
            <person name="Tivey A."/>
            <person name="Walsh S.V."/>
            <person name="Warren T."/>
            <person name="Whitehead S."/>
            <person name="Woodward J.R."/>
            <person name="Volckaert G."/>
            <person name="Aert R."/>
            <person name="Robben J."/>
            <person name="Grymonprez B."/>
            <person name="Weltjens I."/>
            <person name="Vanstreels E."/>
            <person name="Rieger M."/>
            <person name="Schaefer M."/>
            <person name="Mueller-Auer S."/>
            <person name="Gabel C."/>
            <person name="Fuchs M."/>
            <person name="Duesterhoeft A."/>
            <person name="Fritzc C."/>
            <person name="Holzer E."/>
            <person name="Moestl D."/>
            <person name="Hilbert H."/>
            <person name="Borzym K."/>
            <person name="Langer I."/>
            <person name="Beck A."/>
            <person name="Lehrach H."/>
            <person name="Reinhardt R."/>
            <person name="Pohl T.M."/>
            <person name="Eger P."/>
            <person name="Zimmermann W."/>
            <person name="Wedler H."/>
            <person name="Wambutt R."/>
            <person name="Purnelle B."/>
            <person name="Goffeau A."/>
            <person name="Cadieu E."/>
            <person name="Dreano S."/>
            <person name="Gloux S."/>
            <person name="Lelaure V."/>
            <person name="Mottier S."/>
            <person name="Galibert F."/>
            <person name="Aves S.J."/>
            <person name="Xiang Z."/>
            <person name="Hunt C."/>
            <person name="Moore K."/>
            <person name="Hurst S.M."/>
            <person name="Lucas M."/>
            <person name="Rochet M."/>
            <person name="Gaillardin C."/>
            <person name="Tallada V.A."/>
            <person name="Garzon A."/>
            <person name="Thode G."/>
            <person name="Daga R.R."/>
            <person name="Cruzado L."/>
            <person name="Jimenez J."/>
            <person name="Sanchez M."/>
            <person name="del Rey F."/>
            <person name="Benito J."/>
            <person name="Dominguez A."/>
            <person name="Revuelta J.L."/>
            <person name="Moreno S."/>
            <person name="Armstrong J."/>
            <person name="Forsburg S.L."/>
            <person name="Cerutti L."/>
            <person name="Lowe T."/>
            <person name="McCombie W.R."/>
            <person name="Paulsen I."/>
            <person name="Potashkin J."/>
            <person name="Shpakovski G.V."/>
            <person name="Ussery D."/>
            <person name="Barrell B.G."/>
            <person name="Nurse P."/>
        </authorList>
    </citation>
    <scope>NUCLEOTIDE SEQUENCE [LARGE SCALE GENOMIC DNA]</scope>
    <source>
        <strain>972 / ATCC 24843</strain>
    </source>
</reference>
<reference key="2">
    <citation type="journal article" date="2006" name="Nat. Biotechnol.">
        <title>ORFeome cloning and global analysis of protein localization in the fission yeast Schizosaccharomyces pombe.</title>
        <authorList>
            <person name="Matsuyama A."/>
            <person name="Arai R."/>
            <person name="Yashiroda Y."/>
            <person name="Shirai A."/>
            <person name="Kamata A."/>
            <person name="Sekido S."/>
            <person name="Kobayashi Y."/>
            <person name="Hashimoto A."/>
            <person name="Hamamoto M."/>
            <person name="Hiraoka Y."/>
            <person name="Horinouchi S."/>
            <person name="Yoshida M."/>
        </authorList>
    </citation>
    <scope>SUBCELLULAR LOCATION [LARGE SCALE ANALYSIS]</scope>
</reference>
<reference key="3">
    <citation type="journal article" date="2011" name="Genetics">
        <title>Augmented annotation of the Schizosaccharomyces pombe genome reveals additional genes required for growth and viability.</title>
        <authorList>
            <person name="Bitton D.A."/>
            <person name="Wood V."/>
            <person name="Scutt P.J."/>
            <person name="Grallert A."/>
            <person name="Yates T."/>
            <person name="Smith D.L."/>
            <person name="Hagan I.M."/>
            <person name="Miller C.J."/>
        </authorList>
    </citation>
    <scope>IDENTIFICATION OF PROBABLE ERRORS IN GENOMIC SEQUENCE</scope>
</reference>
<feature type="chain" id="PRO_0000317237" description="Uncharacterized isomerase C186.06">
    <location>
        <begin position="1"/>
        <end position="184"/>
    </location>
</feature>
<dbReference type="EC" id="5.1.-.-"/>
<dbReference type="EMBL" id="CU329670">
    <property type="protein sequence ID" value="CAB75870.1"/>
    <property type="molecule type" value="Genomic_DNA"/>
</dbReference>
<dbReference type="PIR" id="T50133">
    <property type="entry name" value="T50133"/>
</dbReference>
<dbReference type="RefSeq" id="NP_595024.1">
    <property type="nucleotide sequence ID" value="NM_001020454.2"/>
</dbReference>
<dbReference type="SMR" id="Q9P7P9"/>
<dbReference type="BioGRID" id="279049">
    <property type="interactions" value="3"/>
</dbReference>
<dbReference type="FunCoup" id="Q9P7P9">
    <property type="interactions" value="458"/>
</dbReference>
<dbReference type="STRING" id="284812.Q9P7P9"/>
<dbReference type="PaxDb" id="4896-SPAC186.06.1"/>
<dbReference type="EnsemblFungi" id="SPAC186.06.1">
    <property type="protein sequence ID" value="SPAC186.06.1:pep"/>
    <property type="gene ID" value="SPAC186.06"/>
</dbReference>
<dbReference type="KEGG" id="spo:2542595"/>
<dbReference type="PomBase" id="SPAC186.06"/>
<dbReference type="VEuPathDB" id="FungiDB:SPAC186.06"/>
<dbReference type="eggNOG" id="KOG3033">
    <property type="taxonomic scope" value="Eukaryota"/>
</dbReference>
<dbReference type="HOGENOM" id="CLU_1469040_0_0_1"/>
<dbReference type="InParanoid" id="Q9P7P9"/>
<dbReference type="PhylomeDB" id="Q9P7P9"/>
<dbReference type="PRO" id="PR:Q9P7P9"/>
<dbReference type="Proteomes" id="UP000002485">
    <property type="component" value="Chromosome I"/>
</dbReference>
<dbReference type="GO" id="GO:0005737">
    <property type="term" value="C:cytoplasm"/>
    <property type="evidence" value="ECO:0000318"/>
    <property type="project" value="GO_Central"/>
</dbReference>
<dbReference type="GO" id="GO:0005829">
    <property type="term" value="C:cytosol"/>
    <property type="evidence" value="ECO:0007005"/>
    <property type="project" value="PomBase"/>
</dbReference>
<dbReference type="GO" id="GO:0005634">
    <property type="term" value="C:nucleus"/>
    <property type="evidence" value="ECO:0007005"/>
    <property type="project" value="PomBase"/>
</dbReference>
<dbReference type="GO" id="GO:0016853">
    <property type="term" value="F:isomerase activity"/>
    <property type="evidence" value="ECO:0000318"/>
    <property type="project" value="GO_Central"/>
</dbReference>
<dbReference type="GO" id="GO:0009058">
    <property type="term" value="P:biosynthetic process"/>
    <property type="evidence" value="ECO:0007669"/>
    <property type="project" value="InterPro"/>
</dbReference>
<dbReference type="Gene3D" id="3.10.310.10">
    <property type="entry name" value="Diaminopimelate Epimerase, Chain A, domain 1"/>
    <property type="match status" value="1"/>
</dbReference>
<dbReference type="InterPro" id="IPR003719">
    <property type="entry name" value="Phenazine_PhzF-like"/>
</dbReference>
<dbReference type="Pfam" id="PF02567">
    <property type="entry name" value="PhzC-PhzF"/>
    <property type="match status" value="1"/>
</dbReference>
<dbReference type="SUPFAM" id="SSF54506">
    <property type="entry name" value="Diaminopimelate epimerase-like"/>
    <property type="match status" value="1"/>
</dbReference>
<comment type="subcellular location">
    <subcellularLocation>
        <location evidence="1">Cytoplasm</location>
    </subcellularLocation>
    <subcellularLocation>
        <location evidence="1">Nucleus</location>
    </subcellularLocation>
</comment>
<comment type="miscellaneous">
    <text>Sequence homology predicts an N-terminally extended version of this protein. However, this extension introduces 2 frameshifts, making it unlikely that this gene is correctly translated or that there are errors in the genomic sequence.</text>
</comment>
<comment type="similarity">
    <text evidence="2">Belongs to the PhzF family.</text>
</comment>
<sequence>MSIKLGYLFKLPSYKTSSISPEVIVDLEKFLNLCEGSCSQCNTPFCVDVGPRNAIIQLPNGADVLNLNPNFQAIFECCSKNSLTGVQIFGMYNDGTYELRSFCPVHGVNEDPANGSGAGSVGVFFALNNPSIISSDFAHLLFNQGKILGRNALIRVAIKLSANGLYDIHVGGGSKICISGTAEI</sequence>
<name>YLY6_SCHPO</name>